<feature type="transit peptide" description="Chloroplast" evidence="34">
    <location>
        <begin position="1"/>
        <end position="66"/>
    </location>
</feature>
<feature type="chain" id="PRO_0000010306" description="Cell division protein FtsZ homolog 1, chloroplastic">
    <location>
        <begin position="67"/>
        <end position="433"/>
    </location>
</feature>
<feature type="region of interest" description="Disordered" evidence="2">
    <location>
        <begin position="399"/>
        <end position="433"/>
    </location>
</feature>
<feature type="compositionally biased region" description="Low complexity" evidence="2">
    <location>
        <begin position="414"/>
        <end position="433"/>
    </location>
</feature>
<feature type="binding site" evidence="1">
    <location>
        <begin position="83"/>
        <end position="87"/>
    </location>
    <ligand>
        <name>GTP</name>
        <dbReference type="ChEBI" id="CHEBI:37565"/>
    </ligand>
</feature>
<feature type="binding site" evidence="1">
    <location>
        <begin position="170"/>
        <end position="172"/>
    </location>
    <ligand>
        <name>GTP</name>
        <dbReference type="ChEBI" id="CHEBI:37565"/>
    </ligand>
</feature>
<feature type="binding site" evidence="1">
    <location>
        <position position="201"/>
    </location>
    <ligand>
        <name>GTP</name>
        <dbReference type="ChEBI" id="CHEBI:37565"/>
    </ligand>
</feature>
<feature type="binding site" evidence="1">
    <location>
        <position position="205"/>
    </location>
    <ligand>
        <name>GTP</name>
        <dbReference type="ChEBI" id="CHEBI:37565"/>
    </ligand>
</feature>
<feature type="binding site" evidence="1">
    <location>
        <position position="249"/>
    </location>
    <ligand>
        <name>GTP</name>
        <dbReference type="ChEBI" id="CHEBI:37565"/>
    </ligand>
</feature>
<feature type="modified residue" description="N-acetylserine" evidence="34">
    <location>
        <position position="67"/>
    </location>
</feature>
<feature type="mutagenesis site" description="Forms long filaments with impaired midplastidial localization, heterogeneous chloroplast population, one greatly enlarged with numerous smaller chloroplasts per cell." evidence="9">
    <original>D</original>
    <variation>N</variation>
    <location>
        <position position="159"/>
    </location>
</feature>
<feature type="mutagenesis site" description="In pmi4; reduced accumulation with impaired midplastidial localization in rings and filaments, giant chloroplasts, and altered chloroplast movements in response to blue light." evidence="6 9">
    <original>G</original>
    <variation>R</variation>
    <location>
        <position position="267"/>
    </location>
</feature>
<feature type="mutagenesis site" description="Impaired GTPase activity." evidence="17">
    <original>D</original>
    <variation>A</variation>
    <location>
        <position position="275"/>
    </location>
</feature>
<feature type="mutagenesis site" description="Reduced accumulation, heterogeneous chloroplast population." evidence="9">
    <original>R</original>
    <variation>Q</variation>
    <location>
        <position position="298"/>
    </location>
</feature>
<feature type="mutagenesis site" description="In arc10; forms long filaments, heterogeneous chloroplast population, one greatly enlarged with numerous smaller chloroplasts per cell." evidence="3 9">
    <original>G</original>
    <variation>A</variation>
    <location>
        <position position="366"/>
    </location>
</feature>
<feature type="sequence conflict" description="In Ref. 1; AAA82068." evidence="31" ref="1">
    <original>S</original>
    <variation>F</variation>
    <location>
        <position position="115"/>
    </location>
</feature>
<keyword id="KW-0007">Acetylation</keyword>
<keyword id="KW-0131">Cell cycle</keyword>
<keyword id="KW-0150">Chloroplast</keyword>
<keyword id="KW-0342">GTP-binding</keyword>
<keyword id="KW-0472">Membrane</keyword>
<keyword id="KW-0547">Nucleotide-binding</keyword>
<keyword id="KW-0934">Plastid</keyword>
<keyword id="KW-1185">Reference proteome</keyword>
<keyword id="KW-0793">Thylakoid</keyword>
<keyword id="KW-0809">Transit peptide</keyword>
<name>FTSZ1_ARATH</name>
<comment type="function">
    <text evidence="3 4 5 6 9 10 15 17 19 20 22 25">Exhibits GTPase activity. Component of the plastid division machinery that forms a contractile ring at the division site (PubMed:25731613). Required for plastid division in a dose-dependent manner. Involved in epidermal plastids division in a MINE1-dependent manner (PubMed:26500667). Involved in blue light-induced chloroplast movements. May regulate thylakoid development. In the vegetative shoot apex, at the shoot apical meristem (SAM), where the proplastid-to-chloroplast transition takes place, contributes equally with FTSZ2-1 in the L2 layer to plastid division (PubMed:29920253).</text>
</comment>
<comment type="subunit">
    <text evidence="7 8 11 12 14 15 16 17 18 21 24">Aggregates to form a contractile ring-like structure; contraction of the ring was accompanied by an increase in the filament turnover rate (PubMed:27322658). This aggregation is regulated in midchloroplast stroma by MIND1 (repressor) and MINE1 (promoter). Self-interacts and binds to FTSZ2-1 in heteromers to form two morphologically distinct types of filaments, termed type-I (smooth filaments) and type-II (rough filaments), in a GTP-dependent manner (PubMed:27322658). Interacts with ARC3. Part of a complex made of ARC3, ARC6, FTSZ1 and FTSZ2 (PubMed:22823492, PubMed:30824505).</text>
</comment>
<comment type="interaction">
    <interactant intactId="EBI-2131124">
        <id>Q42545</id>
    </interactant>
    <interactant intactId="EBI-2000800">
        <id>Q9FIG9</id>
        <label>ARC6</label>
    </interactant>
    <organismsDiffer>false</organismsDiffer>
    <experiments>2</experiments>
</comment>
<comment type="interaction">
    <interactant intactId="EBI-2131124">
        <id>Q42545</id>
    </interactant>
    <interactant intactId="EBI-2131124">
        <id>Q42545</id>
        <label>FTSZ1</label>
    </interactant>
    <organismsDiffer>false</organismsDiffer>
    <experiments>3</experiments>
</comment>
<comment type="interaction">
    <interactant intactId="EBI-2131124">
        <id>Q42545</id>
    </interactant>
    <interactant intactId="EBI-2430270">
        <id>Q9LXJ0</id>
        <label>FTSZ2-2</label>
    </interactant>
    <organismsDiffer>false</organismsDiffer>
    <experiments>6</experiments>
</comment>
<comment type="subcellular location">
    <subcellularLocation>
        <location evidence="13 20 23">Plastid</location>
        <location evidence="13 20 23">Chloroplast stroma</location>
    </subcellularLocation>
    <subcellularLocation>
        <location evidence="13">Plastid</location>
        <location evidence="13">Chloroplast thylakoid membrane</location>
        <topology>Peripheral membrane protein</topology>
    </subcellularLocation>
    <text evidence="19 20 23">Forms a contractile ring at the chloroplast midpoint that coaligns with FTSZ2-1 rings (PubMed:25731613, PubMed:26500667, PubMed:29967285). Exhibits a dynamic trunover in FtsZ ring facilitated by ARC3-mediated destabilization (PubMed:25731613).</text>
</comment>
<comment type="tissue specificity">
    <text evidence="16">In pollen grain, restricted to plastids of vegetative cells. Also present in pollen tubes plastids.</text>
</comment>
<comment type="disruption phenotype">
    <text evidence="9 10 19 22">Highly heterogeneous chloroplast population with giant chloroplasts and some smaller (PubMed:25731613). Impaired chloroplast division, some green cells with one single big chloroplast (PubMed:25731613). Abnormal thylakoids (PubMed:25731613). Increased plastid volume in young leaf primordia and in the shoot apical meristem (SAM), including the central zone as well as peripheral zone of L1, the outermost layer, the peripheral zone of L2, and the peripheral zone of L3 (PubMed:29920253).</text>
</comment>
<comment type="similarity">
    <text evidence="31">Belongs to the FtsZ family.</text>
</comment>
<accession>Q42545</accession>
<accession>Q9FLN6</accession>
<sequence length="433" mass="45565">MAIIPLAQLNELTISSSSSSFLTKSISSHSLHSSCICASSRISQFRGGFSKRRSDSTRSKSMRLRCSFSPMESARIKVIGVGGGGNNAVNRMISSGLQSVDFYAINTDSQALLQSSAENPLQIGELLTRGLGTGGNPLLGEQAAEESKDAIANALKGSDLVFITAGMGGGTGSGAAPVVAQISKDAGYLTVGVVTYPFSFEGRKRSLQALEAIEKLQKNVDTLIVIPNDRLLDIADEQTPLQDAFLLADDVLRQGVQGISDIITIPGLVNVDFADVKAVMKDSGTAMLGVGVSSSKNRAEEAAEQATLAPLIGSSIQSATGVVYNITGGKDITLQEVNRVSQVVTSLADPSANIIFGAVVDDRYTGEIHVTIIATGFSQSFQKTLLTDPRAAKLLDKMGSSGQQENKGMSLPHQKQSPSTISTKSSSPRRLFF</sequence>
<reference key="1">
    <citation type="journal article" date="1995" name="Nature">
        <title>Conserved cell and organelle division.</title>
        <authorList>
            <person name="Osteryoung K.W."/>
            <person name="Vierling E."/>
        </authorList>
    </citation>
    <scope>NUCLEOTIDE SEQUENCE [MRNA]</scope>
    <source>
        <strain>cv. Columbia</strain>
    </source>
</reference>
<reference key="2">
    <citation type="journal article" date="1998" name="DNA Res.">
        <title>Structural analysis of Arabidopsis thaliana chromosome 5. IV. Sequence features of the regions of 1,456,315 bp covered by nineteen physically assigned P1 and TAC clones.</title>
        <authorList>
            <person name="Sato S."/>
            <person name="Kaneko T."/>
            <person name="Kotani H."/>
            <person name="Nakamura Y."/>
            <person name="Asamizu E."/>
            <person name="Miyajima N."/>
            <person name="Tabata S."/>
        </authorList>
    </citation>
    <scope>NUCLEOTIDE SEQUENCE [LARGE SCALE GENOMIC DNA]</scope>
    <source>
        <strain>cv. Columbia</strain>
    </source>
</reference>
<reference key="3">
    <citation type="journal article" date="2017" name="Plant J.">
        <title>Araport11: a complete reannotation of the Arabidopsis thaliana reference genome.</title>
        <authorList>
            <person name="Cheng C.Y."/>
            <person name="Krishnakumar V."/>
            <person name="Chan A.P."/>
            <person name="Thibaud-Nissen F."/>
            <person name="Schobel S."/>
            <person name="Town C.D."/>
        </authorList>
    </citation>
    <scope>GENOME REANNOTATION</scope>
    <source>
        <strain>cv. Columbia</strain>
    </source>
</reference>
<reference key="4">
    <citation type="journal article" date="2003" name="Science">
        <title>Empirical analysis of transcriptional activity in the Arabidopsis genome.</title>
        <authorList>
            <person name="Yamada K."/>
            <person name="Lim J."/>
            <person name="Dale J.M."/>
            <person name="Chen H."/>
            <person name="Shinn P."/>
            <person name="Palm C.J."/>
            <person name="Southwick A.M."/>
            <person name="Wu H.C."/>
            <person name="Kim C.J."/>
            <person name="Nguyen M."/>
            <person name="Pham P.K."/>
            <person name="Cheuk R.F."/>
            <person name="Karlin-Newmann G."/>
            <person name="Liu S.X."/>
            <person name="Lam B."/>
            <person name="Sakano H."/>
            <person name="Wu T."/>
            <person name="Yu G."/>
            <person name="Miranda M."/>
            <person name="Quach H.L."/>
            <person name="Tripp M."/>
            <person name="Chang C.H."/>
            <person name="Lee J.M."/>
            <person name="Toriumi M.J."/>
            <person name="Chan M.M."/>
            <person name="Tang C.C."/>
            <person name="Onodera C.S."/>
            <person name="Deng J.M."/>
            <person name="Akiyama K."/>
            <person name="Ansari Y."/>
            <person name="Arakawa T."/>
            <person name="Banh J."/>
            <person name="Banno F."/>
            <person name="Bowser L."/>
            <person name="Brooks S.Y."/>
            <person name="Carninci P."/>
            <person name="Chao Q."/>
            <person name="Choy N."/>
            <person name="Enju A."/>
            <person name="Goldsmith A.D."/>
            <person name="Gurjal M."/>
            <person name="Hansen N.F."/>
            <person name="Hayashizaki Y."/>
            <person name="Johnson-Hopson C."/>
            <person name="Hsuan V.W."/>
            <person name="Iida K."/>
            <person name="Karnes M."/>
            <person name="Khan S."/>
            <person name="Koesema E."/>
            <person name="Ishida J."/>
            <person name="Jiang P.X."/>
            <person name="Jones T."/>
            <person name="Kawai J."/>
            <person name="Kamiya A."/>
            <person name="Meyers C."/>
            <person name="Nakajima M."/>
            <person name="Narusaka M."/>
            <person name="Seki M."/>
            <person name="Sakurai T."/>
            <person name="Satou M."/>
            <person name="Tamse R."/>
            <person name="Vaysberg M."/>
            <person name="Wallender E.K."/>
            <person name="Wong C."/>
            <person name="Yamamura Y."/>
            <person name="Yuan S."/>
            <person name="Shinozaki K."/>
            <person name="Davis R.W."/>
            <person name="Theologis A."/>
            <person name="Ecker J.R."/>
        </authorList>
    </citation>
    <scope>NUCLEOTIDE SEQUENCE [LARGE SCALE MRNA]</scope>
    <source>
        <strain>cv. Columbia</strain>
    </source>
</reference>
<reference key="5">
    <citation type="journal article" date="1998" name="Plant Cell">
        <title>Chloroplast division in higher plants requires members of two functionally divergent gene families with homology to bacterial ftsZ.</title>
        <authorList>
            <person name="Osteryoung K.W."/>
            <person name="Stokes K.D."/>
            <person name="Rutherford S.M."/>
            <person name="Percival A.L."/>
            <person name="Lee W.Y."/>
        </authorList>
    </citation>
    <scope>FUNCTION</scope>
    <source>
        <strain>cv. Columbia</strain>
    </source>
</reference>
<reference key="6">
    <citation type="journal article" date="1999" name="Plant Cell">
        <title>Plastid division and development.</title>
        <authorList>
            <person name="Pyke K.A."/>
        </authorList>
    </citation>
    <scope>FUNCTION</scope>
    <scope>MUTAGENESIS OF GLY-366</scope>
</reference>
<reference key="7">
    <citation type="journal article" date="2000" name="Plant Physiol.">
        <title>Chloroplast division and morphology are differentially affected by overexpression of FtsZ1 and FtsZ2 genes in Arabidopsis.</title>
        <authorList>
            <person name="Stokes K.D."/>
            <person name="McAndrew R.S."/>
            <person name="Figueroa R."/>
            <person name="Vitha S."/>
            <person name="Osteryoung K.W."/>
        </authorList>
    </citation>
    <scope>FUNCTION</scope>
</reference>
<reference key="8">
    <citation type="journal article" date="2001" name="J. Cell Biol.">
        <title>FtsZ ring formation at the chloroplast division site in plants.</title>
        <authorList>
            <person name="Vitha S."/>
            <person name="McAndrew R.S."/>
            <person name="Osteryoung K.W."/>
        </authorList>
    </citation>
    <scope>SUBCELLULAR LOCATION</scope>
    <source>
        <strain>cv. Columbia</strain>
    </source>
</reference>
<reference key="9">
    <citation type="journal article" date="2001" name="Plant Physiol.">
        <title>Colocalization of plastid division proteins in the chloroplast stromal compartment establishes a new functional relationship between FtsZ1 and FtsZ2 in higher plants.</title>
        <authorList>
            <person name="McAndrew R.S."/>
            <person name="Froehlich J.E."/>
            <person name="Vitha S."/>
            <person name="Stokes K.D."/>
            <person name="Osteryoung K.W."/>
        </authorList>
    </citation>
    <scope>SUBCELLULAR LOCATION</scope>
    <scope>FUNCTION</scope>
    <source>
        <strain>cv. Columbia</strain>
    </source>
</reference>
<reference key="10">
    <citation type="journal article" date="2005" name="Plant J.">
        <title>Plastid division is mediated by combinatorial assembly of plastid division proteins.</title>
        <authorList>
            <person name="Maple J."/>
            <person name="Aldridge C."/>
            <person name="Moeller S.G."/>
        </authorList>
    </citation>
    <scope>INTERACTION WITH FTSZ2-1</scope>
    <scope>SELF-INTERACTION</scope>
</reference>
<reference key="11">
    <citation type="journal article" date="2005" name="Plant Physiol.">
        <title>A plant-specific protein essential for blue-light-induced chloroplast movements.</title>
        <authorList>
            <person name="DeBlasio S.L."/>
            <person name="Luesse D.L."/>
            <person name="Hangarter R.P."/>
        </authorList>
    </citation>
    <scope>FUNCTION</scope>
    <scope>MUTAGENESIS OF GLY-267</scope>
</reference>
<reference key="12">
    <citation type="journal article" date="2007" name="EMBO Rep.">
        <title>ARC3 is a stromal Z-ring accessory protein essential for plastid division.</title>
        <authorList>
            <person name="Maple J."/>
            <person name="Vojta L."/>
            <person name="Soll J."/>
            <person name="Moeller S.G."/>
        </authorList>
    </citation>
    <scope>INTERACTION WITH ARC3</scope>
</reference>
<reference key="13">
    <citation type="journal article" date="2007" name="Plant Cell Physiol.">
        <title>Effects of mutations in Arabidopsis FtsZ1 on plastid division, FtsZ ring formation and positioning, and FtsZ filament morphology in vivo.</title>
        <authorList>
            <person name="Yoder D.W."/>
            <person name="Kadirjan-Kalbach D."/>
            <person name="Olson B.J.S.C."/>
            <person name="Miyagishima S.-Y."/>
            <person name="Deblasio S.L."/>
            <person name="Hangarter R.P."/>
            <person name="Osteryoung K.W."/>
        </authorList>
    </citation>
    <scope>FUNCTION</scope>
    <scope>DISRUPTION PHENOTYPE</scope>
    <scope>MUTAGENESIS OF ASP-159; GLY-267; ARG-298 AND GLY-366</scope>
    <scope>SUBCELLULAR LOCATION</scope>
    <source>
        <strain>cv. Columbia</strain>
        <strain>cv. Wassilewskija-2</strain>
    </source>
</reference>
<reference key="14">
    <citation type="journal article" date="2008" name="Biochem. J.">
        <title>Developmentally regulated association of plastid division protein FtsZ1 with thylakoid membranes in Arabidopsis thaliana.</title>
        <authorList>
            <person name="El-Kafafi E.-S."/>
            <person name="Karamoko M."/>
            <person name="Pignot-Paintrand I."/>
            <person name="Grunwald D."/>
            <person name="Mandaron P."/>
            <person name="Lerbs-Mache S."/>
            <person name="Falconet D."/>
        </authorList>
    </citation>
    <scope>FUNCTION</scope>
    <scope>DISRUPTION PHENOTYPE</scope>
    <scope>SUBCELLULAR LOCATION</scope>
    <source>
        <strain>cv. Wassilewskija</strain>
    </source>
</reference>
<reference key="15">
    <citation type="journal article" date="2008" name="Biochem. J.">
        <title>In vivo quantitative relationship between plastid division proteins FtsZ1 and FtsZ2 and identification of ARC6 and ARC3 in a native FtsZ complex.</title>
        <authorList>
            <person name="McAndrew R.S."/>
            <person name="Olson B.J."/>
            <person name="Kadirjan-Kalbach D.K."/>
            <person name="Chi-Ham C.L."/>
            <person name="Vitha S."/>
            <person name="Froehlich J.E."/>
            <person name="Osteryoung K.W."/>
        </authorList>
    </citation>
    <scope>SUBUNIT</scope>
    <scope>SUBCELLULAR LOCATION</scope>
    <source>
        <strain>cv. Columbia</strain>
    </source>
</reference>
<reference key="16">
    <citation type="journal article" date="2008" name="PLoS ONE">
        <title>Sorting signals, N-terminal modifications and abundance of the chloroplast proteome.</title>
        <authorList>
            <person name="Zybailov B."/>
            <person name="Rutschow H."/>
            <person name="Friso G."/>
            <person name="Rudella A."/>
            <person name="Emanuelsson O."/>
            <person name="Sun Q."/>
            <person name="van Wijk K.J."/>
        </authorList>
    </citation>
    <scope>IDENTIFICATION BY MASS SPECTROMETRY</scope>
    <scope>SUBCELLULAR LOCATION [LARGE SCALE ANALYSIS]</scope>
</reference>
<reference key="17">
    <citation type="journal article" date="2008" name="Plant Cell Physiol.">
        <title>The assembly of the FtsZ ring at the mid-chloroplast division site depends on a balance between the activities of AtMinE1 and ARC11/AtMinD1.</title>
        <authorList>
            <person name="Fujiwara M.T."/>
            <person name="Hashimoto H."/>
            <person name="Kazama Y."/>
            <person name="Abe T."/>
            <person name="Yoshida S."/>
            <person name="Sato N."/>
            <person name="Itoh R.D."/>
        </authorList>
    </citation>
    <scope>SUBUNIT</scope>
    <scope>SUBCELLULAR LOCATION</scope>
</reference>
<reference key="18">
    <citation type="journal article" date="2009" name="Plant Cell Physiol.">
        <title>Live imaging of chloroplast FtsZ1 filaments, rings, spirals, and motile dot structures in the AtMinE1 mutant and overexpressor of Arabidopsis thaliana.</title>
        <authorList>
            <person name="Fujiwara M.T."/>
            <person name="Sekine K."/>
            <person name="Yamamoto Y.Y."/>
            <person name="Abe T."/>
            <person name="Sato N."/>
            <person name="Itoh R.D."/>
        </authorList>
    </citation>
    <scope>SUBUNIT</scope>
    <scope>SUBCELLULAR LOCATION</scope>
</reference>
<reference key="19">
    <citation type="journal article" date="2010" name="FEBS Lett.">
        <title>Plant FtsZ1 and FtsZ2 expressed in a eukaryotic host: GTPase activity and self-assembly.</title>
        <authorList>
            <person name="Smith A.G."/>
            <person name="Johnson C.B."/>
            <person name="Vitha S."/>
            <person name="Holzenburg A."/>
        </authorList>
    </citation>
    <scope>FUNCTION</scope>
    <scope>SUBUNIT</scope>
</reference>
<reference key="20">
    <citation type="journal article" date="2010" name="J. Biol. Chem.">
        <title>GTP-dependent heteropolymer formation and bundling of chloroplast FtsZ1 and FtsZ2.</title>
        <authorList>
            <person name="Olson B.J.S.C."/>
            <person name="Wang Q."/>
            <person name="Osteryoung K.W."/>
        </authorList>
    </citation>
    <scope>FUNCTION AS GTPASE</scope>
    <scope>SUBUNIT</scope>
    <scope>MUTAGENESIS OF ASP-275</scope>
</reference>
<reference key="21">
    <citation type="journal article" date="2010" name="Protoplasma">
        <title>Dynamic morphologies of pollen plastids visualised by vegetative-specific FtsZ1-GFP in Arabidopsis thaliana.</title>
        <authorList>
            <person name="Fujiwara M.T."/>
            <person name="Hashimoto H."/>
            <person name="Kazama Y."/>
            <person name="Hirano T."/>
            <person name="Yoshioka Y."/>
            <person name="Aoki S."/>
            <person name="Sato N."/>
            <person name="Itoh R.D."/>
            <person name="Abe T."/>
        </authorList>
    </citation>
    <scope>SUBCELLULAR LOCATION</scope>
    <scope>TISSUE SPECIFICITY</scope>
    <scope>SUBUNIT</scope>
    <source>
        <strain>cv. Columbia</strain>
        <strain>cv. Landsberg erecta</strain>
    </source>
</reference>
<reference key="22">
    <citation type="journal article" date="2012" name="Biochem. J.">
        <title>In vivo phosphorylation of FtsZ2 in Arabidopsis thaliana.</title>
        <authorList>
            <person name="Gargano D."/>
            <person name="Maple-Groedem J."/>
            <person name="Moeller S.G."/>
        </authorList>
    </citation>
    <scope>INTERACTION WITH ARC6; FTSZ2-1 AND FTSZ2-2</scope>
</reference>
<reference key="23">
    <citation type="journal article" date="2012" name="Mol. Cell. Proteomics">
        <title>Comparative large-scale characterisation of plant vs. mammal proteins reveals similar and idiosyncratic N-alpha acetylation features.</title>
        <authorList>
            <person name="Bienvenut W.V."/>
            <person name="Sumpton D."/>
            <person name="Martinez A."/>
            <person name="Lilla S."/>
            <person name="Espagne C."/>
            <person name="Meinnel T."/>
            <person name="Giglione C."/>
        </authorList>
    </citation>
    <scope>ACETYLATION [LARGE SCALE ANALYSIS] AT SER-67</scope>
    <scope>CLEAVAGE OF TRANSIT PEPTIDE [LARGE SCALE ANALYSIS] AFTER CYS-66</scope>
    <scope>IDENTIFICATION BY MASS SPECTROMETRY [LARGE SCALE ANALYSIS]</scope>
</reference>
<reference key="24">
    <citation type="journal article" date="2015" name="Front. Plant Sci.">
        <title>The Arabidopsis minE mutation causes new plastid and FtsZ1 localization phenotypes in the leaf epidermis.</title>
        <authorList>
            <person name="Fujiwara M.T."/>
            <person name="Kojo K.H."/>
            <person name="Kazama Y."/>
            <person name="Sasaki S."/>
            <person name="Abe T."/>
            <person name="Itoh R.D."/>
        </authorList>
    </citation>
    <scope>FUNCTION</scope>
    <scope>SUBCELLULAR LOCATION</scope>
    <source>
        <strain>cv. Columbia</strain>
        <strain>cv. Wassilewskija</strain>
    </source>
</reference>
<reference key="25">
    <citation type="journal article" date="2015" name="Microsc. Microanal.">
        <title>FtsZ1/FtsZ2 turnover in chloroplasts and the role of ARC3.</title>
        <authorList>
            <person name="Johnson C.B."/>
            <person name="Shaik R."/>
            <person name="Abdallah R."/>
            <person name="Vitha S."/>
            <person name="Holzenburg A."/>
        </authorList>
    </citation>
    <scope>FUNCTION</scope>
    <scope>DISRUPTION PHENOTYPE</scope>
    <scope>SUBCELLULAR LOCATION</scope>
    <source>
        <strain>cv. Columbia</strain>
    </source>
</reference>
<reference key="26">
    <citation type="journal article" date="2016" name="Nat. Plants">
        <title>Chloroplast FtsZ assembles into a contractible ring via tubulin-like heteropolymerization.</title>
        <authorList>
            <person name="Yoshida Y."/>
            <person name="Mogi Y."/>
            <person name="TerBush A.D."/>
            <person name="Osteryoung K.W."/>
        </authorList>
    </citation>
    <scope>SUBUNIT</scope>
</reference>
<reference key="27">
    <citation type="journal article" date="2018" name="Dev. Biol.">
        <title>Differential impacts of FtsZ proteins on plastid division in the shoot apex of Arabidopsis.</title>
        <authorList>
            <person name="Swid N."/>
            <person name="Nevo R."/>
            <person name="Kiss V."/>
            <person name="Kapon R."/>
            <person name="Dagan S."/>
            <person name="Snir O."/>
            <person name="Adam Z."/>
            <person name="Falconet D."/>
            <person name="Reich Z."/>
            <person name="Charuvi D."/>
        </authorList>
    </citation>
    <scope>FUNCTION</scope>
    <scope>DISRUPTION PHENOTYPE</scope>
    <source>
        <strain>cv. Columbia</strain>
        <strain>cv. Wassilewskija</strain>
    </source>
</reference>
<reference key="28">
    <citation type="journal article" date="2018" name="Plant Cell">
        <title>MCD1 associates with FtsZ filaments via the membrane-tethering protein ARC6 to guide chloroplast division.</title>
        <authorList>
            <person name="Chen L."/>
            <person name="Sun B."/>
            <person name="Gao W."/>
            <person name="Zhang Q.Y."/>
            <person name="Yuan H."/>
            <person name="Zhang M."/>
        </authorList>
    </citation>
    <scope>SUBCELLULAR LOCATION</scope>
    <source>
        <strain>cv. Columbia</strain>
    </source>
</reference>
<reference key="29">
    <citation type="journal article" date="2019" name="Plant Cell">
        <title>ARC3 activation by PARC6 promotes FtsZ-ring remodeling at the chloroplast division site.</title>
        <authorList>
            <person name="Chen C."/>
            <person name="Cao L."/>
            <person name="Yang Y."/>
            <person name="Porter K.J."/>
            <person name="Osteryoung K.W."/>
        </authorList>
    </citation>
    <scope>INTERACTION WITH ARC3</scope>
    <source>
        <strain>cv. Columbia</strain>
    </source>
</reference>
<gene>
    <name evidence="27" type="primary">FTSZ1</name>
    <name evidence="26" type="synonym">ARC10</name>
    <name evidence="30" type="synonym">FTSZ1-1</name>
    <name evidence="28" type="synonym">PMI4</name>
    <name evidence="32" type="ordered locus">At5g55280</name>
    <name evidence="33" type="ORF">MCO15.23</name>
</gene>
<dbReference type="EMBL" id="U39877">
    <property type="protein sequence ID" value="AAA82068.1"/>
    <property type="molecule type" value="mRNA"/>
</dbReference>
<dbReference type="EMBL" id="AB010071">
    <property type="protein sequence ID" value="BAB08597.1"/>
    <property type="molecule type" value="Genomic_DNA"/>
</dbReference>
<dbReference type="EMBL" id="CP002688">
    <property type="protein sequence ID" value="AED96609.1"/>
    <property type="molecule type" value="Genomic_DNA"/>
</dbReference>
<dbReference type="EMBL" id="AY034992">
    <property type="protein sequence ID" value="AAK59497.1"/>
    <property type="molecule type" value="mRNA"/>
</dbReference>
<dbReference type="EMBL" id="AY113896">
    <property type="protein sequence ID" value="AAM44944.1"/>
    <property type="molecule type" value="mRNA"/>
</dbReference>
<dbReference type="RefSeq" id="NP_200339.1">
    <property type="nucleotide sequence ID" value="NM_124910.6"/>
</dbReference>
<dbReference type="SMR" id="Q42545"/>
<dbReference type="BioGRID" id="20865">
    <property type="interactions" value="5"/>
</dbReference>
<dbReference type="FunCoup" id="Q42545">
    <property type="interactions" value="657"/>
</dbReference>
<dbReference type="IntAct" id="Q42545">
    <property type="interactions" value="5"/>
</dbReference>
<dbReference type="MINT" id="Q42545"/>
<dbReference type="STRING" id="3702.Q42545"/>
<dbReference type="iPTMnet" id="Q42545"/>
<dbReference type="PaxDb" id="3702-AT5G55280.1"/>
<dbReference type="ProteomicsDB" id="230552"/>
<dbReference type="EnsemblPlants" id="AT5G55280.1">
    <property type="protein sequence ID" value="AT5G55280.1"/>
    <property type="gene ID" value="AT5G55280"/>
</dbReference>
<dbReference type="GeneID" id="835621"/>
<dbReference type="Gramene" id="AT5G55280.1">
    <property type="protein sequence ID" value="AT5G55280.1"/>
    <property type="gene ID" value="AT5G55280"/>
</dbReference>
<dbReference type="KEGG" id="ath:AT5G55280"/>
<dbReference type="Araport" id="AT5G55280"/>
<dbReference type="TAIR" id="AT5G55280">
    <property type="gene designation" value="FTSZ1-1"/>
</dbReference>
<dbReference type="eggNOG" id="ENOG502QRFN">
    <property type="taxonomic scope" value="Eukaryota"/>
</dbReference>
<dbReference type="HOGENOM" id="CLU_024865_0_0_1"/>
<dbReference type="InParanoid" id="Q42545"/>
<dbReference type="OMA" id="GNPSIGQ"/>
<dbReference type="OrthoDB" id="70257at2759"/>
<dbReference type="PhylomeDB" id="Q42545"/>
<dbReference type="PRO" id="PR:Q42545"/>
<dbReference type="Proteomes" id="UP000006548">
    <property type="component" value="Chromosome 5"/>
</dbReference>
<dbReference type="ExpressionAtlas" id="Q42545">
    <property type="expression patterns" value="baseline and differential"/>
</dbReference>
<dbReference type="GO" id="GO:0009507">
    <property type="term" value="C:chloroplast"/>
    <property type="evidence" value="ECO:0007005"/>
    <property type="project" value="TAIR"/>
</dbReference>
<dbReference type="GO" id="GO:0009570">
    <property type="term" value="C:chloroplast stroma"/>
    <property type="evidence" value="ECO:0000314"/>
    <property type="project" value="UniProtKB"/>
</dbReference>
<dbReference type="GO" id="GO:0009535">
    <property type="term" value="C:chloroplast thylakoid membrane"/>
    <property type="evidence" value="ECO:0007669"/>
    <property type="project" value="UniProtKB-SubCell"/>
</dbReference>
<dbReference type="GO" id="GO:0070938">
    <property type="term" value="C:contractile ring"/>
    <property type="evidence" value="ECO:0000314"/>
    <property type="project" value="UniProtKB"/>
</dbReference>
<dbReference type="GO" id="GO:0005874">
    <property type="term" value="C:microtubule"/>
    <property type="evidence" value="ECO:0007669"/>
    <property type="project" value="InterPro"/>
</dbReference>
<dbReference type="GO" id="GO:0009536">
    <property type="term" value="C:plastid"/>
    <property type="evidence" value="ECO:0007005"/>
    <property type="project" value="TAIR"/>
</dbReference>
<dbReference type="GO" id="GO:0005525">
    <property type="term" value="F:GTP binding"/>
    <property type="evidence" value="ECO:0000314"/>
    <property type="project" value="UniProtKB"/>
</dbReference>
<dbReference type="GO" id="GO:0003924">
    <property type="term" value="F:GTPase activity"/>
    <property type="evidence" value="ECO:0000314"/>
    <property type="project" value="UniProtKB"/>
</dbReference>
<dbReference type="GO" id="GO:0042802">
    <property type="term" value="F:identical protein binding"/>
    <property type="evidence" value="ECO:0000353"/>
    <property type="project" value="IntAct"/>
</dbReference>
<dbReference type="GO" id="GO:0042803">
    <property type="term" value="F:protein homodimerization activity"/>
    <property type="evidence" value="ECO:0000314"/>
    <property type="project" value="UniProtKB"/>
</dbReference>
<dbReference type="GO" id="GO:0010020">
    <property type="term" value="P:chloroplast fission"/>
    <property type="evidence" value="ECO:0000315"/>
    <property type="project" value="TAIR"/>
</dbReference>
<dbReference type="GO" id="GO:0009658">
    <property type="term" value="P:chloroplast organization"/>
    <property type="evidence" value="ECO:0000315"/>
    <property type="project" value="UniProtKB"/>
</dbReference>
<dbReference type="GO" id="GO:0009902">
    <property type="term" value="P:chloroplast relocation"/>
    <property type="evidence" value="ECO:0000315"/>
    <property type="project" value="UniProtKB"/>
</dbReference>
<dbReference type="GO" id="GO:0007017">
    <property type="term" value="P:microtubule-based process"/>
    <property type="evidence" value="ECO:0007669"/>
    <property type="project" value="InterPro"/>
</dbReference>
<dbReference type="GO" id="GO:0043572">
    <property type="term" value="P:plastid fission"/>
    <property type="evidence" value="ECO:0000315"/>
    <property type="project" value="TAIR"/>
</dbReference>
<dbReference type="GO" id="GO:0009637">
    <property type="term" value="P:response to blue light"/>
    <property type="evidence" value="ECO:0000315"/>
    <property type="project" value="UniProtKB"/>
</dbReference>
<dbReference type="CDD" id="cd02201">
    <property type="entry name" value="FtsZ_type1"/>
    <property type="match status" value="1"/>
</dbReference>
<dbReference type="FunFam" id="3.30.1330.20:FF:000012">
    <property type="entry name" value="Cell division protein FtsZ 1, chloroplastic"/>
    <property type="match status" value="1"/>
</dbReference>
<dbReference type="FunFam" id="3.40.50.1440:FF:000022">
    <property type="entry name" value="Cell division protein FtsZ 1, chloroplastic"/>
    <property type="match status" value="1"/>
</dbReference>
<dbReference type="Gene3D" id="3.30.1330.20">
    <property type="entry name" value="Tubulin/FtsZ, C-terminal domain"/>
    <property type="match status" value="1"/>
</dbReference>
<dbReference type="Gene3D" id="3.40.50.1440">
    <property type="entry name" value="Tubulin/FtsZ, GTPase domain"/>
    <property type="match status" value="1"/>
</dbReference>
<dbReference type="HAMAP" id="MF_00909">
    <property type="entry name" value="FtsZ"/>
    <property type="match status" value="1"/>
</dbReference>
<dbReference type="InterPro" id="IPR000158">
    <property type="entry name" value="Cell_div_FtsZ"/>
</dbReference>
<dbReference type="InterPro" id="IPR020805">
    <property type="entry name" value="Cell_div_FtsZ_CS"/>
</dbReference>
<dbReference type="InterPro" id="IPR045061">
    <property type="entry name" value="FtsZ/CetZ"/>
</dbReference>
<dbReference type="InterPro" id="IPR024757">
    <property type="entry name" value="FtsZ_C"/>
</dbReference>
<dbReference type="InterPro" id="IPR008280">
    <property type="entry name" value="Tub_FtsZ_C"/>
</dbReference>
<dbReference type="InterPro" id="IPR037103">
    <property type="entry name" value="Tubulin/FtsZ-like_C"/>
</dbReference>
<dbReference type="InterPro" id="IPR018316">
    <property type="entry name" value="Tubulin/FtsZ_2-layer-sand-dom"/>
</dbReference>
<dbReference type="InterPro" id="IPR036525">
    <property type="entry name" value="Tubulin/FtsZ_GTPase_sf"/>
</dbReference>
<dbReference type="InterPro" id="IPR017975">
    <property type="entry name" value="Tubulin_CS"/>
</dbReference>
<dbReference type="InterPro" id="IPR003008">
    <property type="entry name" value="Tubulin_FtsZ_GTPase"/>
</dbReference>
<dbReference type="NCBIfam" id="TIGR00065">
    <property type="entry name" value="ftsZ"/>
    <property type="match status" value="1"/>
</dbReference>
<dbReference type="PANTHER" id="PTHR30314:SF12">
    <property type="entry name" value="CELL DIVISION PROTEIN FTSZ HOMOLOG 1, CHLOROPLASTIC"/>
    <property type="match status" value="1"/>
</dbReference>
<dbReference type="PANTHER" id="PTHR30314">
    <property type="entry name" value="CELL DIVISION PROTEIN FTSZ-RELATED"/>
    <property type="match status" value="1"/>
</dbReference>
<dbReference type="Pfam" id="PF12327">
    <property type="entry name" value="FtsZ_C"/>
    <property type="match status" value="1"/>
</dbReference>
<dbReference type="Pfam" id="PF00091">
    <property type="entry name" value="Tubulin"/>
    <property type="match status" value="1"/>
</dbReference>
<dbReference type="PRINTS" id="PR00423">
    <property type="entry name" value="CELLDVISFTSZ"/>
</dbReference>
<dbReference type="SMART" id="SM00864">
    <property type="entry name" value="Tubulin"/>
    <property type="match status" value="1"/>
</dbReference>
<dbReference type="SMART" id="SM00865">
    <property type="entry name" value="Tubulin_C"/>
    <property type="match status" value="1"/>
</dbReference>
<dbReference type="SUPFAM" id="SSF55307">
    <property type="entry name" value="Tubulin C-terminal domain-like"/>
    <property type="match status" value="1"/>
</dbReference>
<dbReference type="SUPFAM" id="SSF52490">
    <property type="entry name" value="Tubulin nucleotide-binding domain-like"/>
    <property type="match status" value="1"/>
</dbReference>
<dbReference type="PROSITE" id="PS01134">
    <property type="entry name" value="FTSZ_1"/>
    <property type="match status" value="1"/>
</dbReference>
<dbReference type="PROSITE" id="PS01135">
    <property type="entry name" value="FTSZ_2"/>
    <property type="match status" value="1"/>
</dbReference>
<protein>
    <recommendedName>
        <fullName evidence="27">Cell division protein FtsZ homolog 1, chloroplastic</fullName>
        <shortName evidence="27">AtFtsZ1</shortName>
        <shortName evidence="30">AtFtsZ1-1</shortName>
        <shortName evidence="29">Chloroplast FtsZ</shortName>
        <shortName evidence="29">CpFtsZ</shortName>
    </recommendedName>
    <alternativeName>
        <fullName evidence="26">Protein ACCUMULATION AND REPLICATION OF CHLOROPLASTS 10</fullName>
    </alternativeName>
    <alternativeName>
        <fullName evidence="28">Protein PLASTID MOVEMENT IMPAIRED4</fullName>
    </alternativeName>
</protein>
<evidence type="ECO:0000250" key="1">
    <source>
        <dbReference type="UniProtKB" id="P0A029"/>
    </source>
</evidence>
<evidence type="ECO:0000256" key="2">
    <source>
        <dbReference type="SAM" id="MobiDB-lite"/>
    </source>
</evidence>
<evidence type="ECO:0000269" key="3">
    <source>
    </source>
</evidence>
<evidence type="ECO:0000269" key="4">
    <source>
    </source>
</evidence>
<evidence type="ECO:0000269" key="5">
    <source>
    </source>
</evidence>
<evidence type="ECO:0000269" key="6">
    <source>
    </source>
</evidence>
<evidence type="ECO:0000269" key="7">
    <source>
    </source>
</evidence>
<evidence type="ECO:0000269" key="8">
    <source>
    </source>
</evidence>
<evidence type="ECO:0000269" key="9">
    <source>
    </source>
</evidence>
<evidence type="ECO:0000269" key="10">
    <source>
    </source>
</evidence>
<evidence type="ECO:0000269" key="11">
    <source>
    </source>
</evidence>
<evidence type="ECO:0000269" key="12">
    <source>
    </source>
</evidence>
<evidence type="ECO:0000269" key="13">
    <source>
    </source>
</evidence>
<evidence type="ECO:0000269" key="14">
    <source>
    </source>
</evidence>
<evidence type="ECO:0000269" key="15">
    <source>
    </source>
</evidence>
<evidence type="ECO:0000269" key="16">
    <source>
    </source>
</evidence>
<evidence type="ECO:0000269" key="17">
    <source>
    </source>
</evidence>
<evidence type="ECO:0000269" key="18">
    <source>
    </source>
</evidence>
<evidence type="ECO:0000269" key="19">
    <source>
    </source>
</evidence>
<evidence type="ECO:0000269" key="20">
    <source>
    </source>
</evidence>
<evidence type="ECO:0000269" key="21">
    <source>
    </source>
</evidence>
<evidence type="ECO:0000269" key="22">
    <source>
    </source>
</evidence>
<evidence type="ECO:0000269" key="23">
    <source>
    </source>
</evidence>
<evidence type="ECO:0000269" key="24">
    <source>
    </source>
</evidence>
<evidence type="ECO:0000269" key="25">
    <source>
    </source>
</evidence>
<evidence type="ECO:0000303" key="26">
    <source>
    </source>
</evidence>
<evidence type="ECO:0000303" key="27">
    <source>
    </source>
</evidence>
<evidence type="ECO:0000303" key="28">
    <source>
    </source>
</evidence>
<evidence type="ECO:0000303" key="29">
    <source>
    </source>
</evidence>
<evidence type="ECO:0000303" key="30">
    <source>
    </source>
</evidence>
<evidence type="ECO:0000305" key="31"/>
<evidence type="ECO:0000312" key="32">
    <source>
        <dbReference type="Araport" id="AT5G55280"/>
    </source>
</evidence>
<evidence type="ECO:0000312" key="33">
    <source>
        <dbReference type="EMBL" id="BAB08597.1"/>
    </source>
</evidence>
<evidence type="ECO:0007744" key="34">
    <source>
    </source>
</evidence>
<proteinExistence type="evidence at protein level"/>
<organism>
    <name type="scientific">Arabidopsis thaliana</name>
    <name type="common">Mouse-ear cress</name>
    <dbReference type="NCBI Taxonomy" id="3702"/>
    <lineage>
        <taxon>Eukaryota</taxon>
        <taxon>Viridiplantae</taxon>
        <taxon>Streptophyta</taxon>
        <taxon>Embryophyta</taxon>
        <taxon>Tracheophyta</taxon>
        <taxon>Spermatophyta</taxon>
        <taxon>Magnoliopsida</taxon>
        <taxon>eudicotyledons</taxon>
        <taxon>Gunneridae</taxon>
        <taxon>Pentapetalae</taxon>
        <taxon>rosids</taxon>
        <taxon>malvids</taxon>
        <taxon>Brassicales</taxon>
        <taxon>Brassicaceae</taxon>
        <taxon>Camelineae</taxon>
        <taxon>Arabidopsis</taxon>
    </lineage>
</organism>